<reference key="1">
    <citation type="journal article" date="2006" name="Virology">
        <title>The genome of Epstein-Barr virus type 2 strain AG876.</title>
        <authorList>
            <person name="Dolan A."/>
            <person name="Addison C."/>
            <person name="Gatherer D."/>
            <person name="Davison A.J."/>
            <person name="McGeoch D.J."/>
        </authorList>
    </citation>
    <scope>NUCLEOTIDE SEQUENCE [LARGE SCALE GENOMIC DNA]</scope>
</reference>
<organismHost>
    <name type="scientific">Homo sapiens</name>
    <name type="common">Human</name>
    <dbReference type="NCBI Taxonomy" id="9606"/>
</organismHost>
<gene>
    <name type="ORF">BNLF2a</name>
</gene>
<comment type="function">
    <text>Participates in viral evasion from HLA class I-restricted T-cell immunity. Associates with host TAP1 and TAP2 and prevents TAP-mediated peptide transport and subsequent loading.</text>
</comment>
<comment type="subunit">
    <text evidence="1">Interacts with host TAP1 and TAP2.</text>
</comment>
<comment type="subcellular location">
    <subcellularLocation>
        <location evidence="4">Host endoplasmic reticulum membrane</location>
        <topology evidence="4">Single-pass membrane protein</topology>
    </subcellularLocation>
</comment>
<comment type="similarity">
    <text evidence="4">Belongs to the lymphocryptovirus BNLF2a family.</text>
</comment>
<dbReference type="EMBL" id="DQ279927">
    <property type="protein sequence ID" value="ABB89293.1"/>
    <property type="molecule type" value="Genomic_DNA"/>
</dbReference>
<dbReference type="RefSeq" id="YP_001129514.1">
    <property type="nucleotide sequence ID" value="NC_009334.1"/>
</dbReference>
<dbReference type="RefSeq" id="YP_401721.1">
    <property type="nucleotide sequence ID" value="NC_007605.1"/>
</dbReference>
<dbReference type="SMR" id="P0C737"/>
<dbReference type="DNASU" id="3783720"/>
<dbReference type="GeneID" id="3783720"/>
<dbReference type="KEGG" id="vg:3783720"/>
<dbReference type="KEGG" id="vg:5176159"/>
<dbReference type="Proteomes" id="UP000007639">
    <property type="component" value="Genome"/>
</dbReference>
<dbReference type="GO" id="GO:0044167">
    <property type="term" value="C:host cell endoplasmic reticulum membrane"/>
    <property type="evidence" value="ECO:0007669"/>
    <property type="project" value="UniProtKB-SubCell"/>
</dbReference>
<dbReference type="GO" id="GO:0016020">
    <property type="term" value="C:membrane"/>
    <property type="evidence" value="ECO:0007669"/>
    <property type="project" value="UniProtKB-KW"/>
</dbReference>
<dbReference type="GO" id="GO:0039588">
    <property type="term" value="P:symbiont-mediated suppression of host antigen processing and presentation"/>
    <property type="evidence" value="ECO:0007669"/>
    <property type="project" value="UniProtKB-KW"/>
</dbReference>
<name>BNL2A_EBVA8</name>
<proteinExistence type="inferred from homology"/>
<accession>P0C737</accession>
<accession>Q04361</accession>
<accession>Q8AZJ2</accession>
<organism>
    <name type="scientific">Epstein-Barr virus (strain AG876)</name>
    <name type="common">HHV-4</name>
    <name type="synonym">Human herpesvirus 4</name>
    <dbReference type="NCBI Taxonomy" id="82830"/>
    <lineage>
        <taxon>Viruses</taxon>
        <taxon>Duplodnaviria</taxon>
        <taxon>Heunggongvirae</taxon>
        <taxon>Peploviricota</taxon>
        <taxon>Herviviricetes</taxon>
        <taxon>Herpesvirales</taxon>
        <taxon>Orthoherpesviridae</taxon>
        <taxon>Gammaherpesvirinae</taxon>
        <taxon>Lymphocryptovirus</taxon>
        <taxon>Lymphocryptovirus humangamma4</taxon>
        <taxon>Epstein-Barr virus (strain GD1)</taxon>
    </lineage>
</organism>
<feature type="chain" id="PRO_0000382428" description="Protein BNLF2a">
    <location>
        <begin position="1"/>
        <end position="60"/>
    </location>
</feature>
<feature type="transmembrane region" description="Helical" evidence="2">
    <location>
        <begin position="41"/>
        <end position="59"/>
    </location>
</feature>
<feature type="region of interest" description="Disordered" evidence="3">
    <location>
        <begin position="14"/>
        <end position="34"/>
    </location>
</feature>
<feature type="compositionally biased region" description="Polar residues" evidence="3">
    <location>
        <begin position="14"/>
        <end position="26"/>
    </location>
</feature>
<sequence>MVHVLERALLEQQSSACGLPGSSTETRPSHPCPEDPDVSRLRLLLVVLCVLFGLLCLLLI</sequence>
<evidence type="ECO:0000250" key="1"/>
<evidence type="ECO:0000255" key="2"/>
<evidence type="ECO:0000256" key="3">
    <source>
        <dbReference type="SAM" id="MobiDB-lite"/>
    </source>
</evidence>
<evidence type="ECO:0000305" key="4"/>
<protein>
    <recommendedName>
        <fullName>Protein BNLF2a</fullName>
    </recommendedName>
</protein>
<keyword id="KW-1038">Host endoplasmic reticulum</keyword>
<keyword id="KW-1043">Host membrane</keyword>
<keyword id="KW-0945">Host-virus interaction</keyword>
<keyword id="KW-1080">Inhibition of host adaptive immune response by virus</keyword>
<keyword id="KW-1107">Inhibition of host TAP by virus</keyword>
<keyword id="KW-0472">Membrane</keyword>
<keyword id="KW-1185">Reference proteome</keyword>
<keyword id="KW-0812">Transmembrane</keyword>
<keyword id="KW-1133">Transmembrane helix</keyword>
<keyword id="KW-0899">Viral immunoevasion</keyword>